<proteinExistence type="inferred from homology"/>
<keyword id="KW-0963">Cytoplasm</keyword>
<keyword id="KW-0444">Lipid biosynthesis</keyword>
<keyword id="KW-0443">Lipid metabolism</keyword>
<keyword id="KW-0594">Phospholipid biosynthesis</keyword>
<keyword id="KW-1208">Phospholipid metabolism</keyword>
<keyword id="KW-0808">Transferase</keyword>
<evidence type="ECO:0000255" key="1">
    <source>
        <dbReference type="HAMAP-Rule" id="MF_00019"/>
    </source>
</evidence>
<evidence type="ECO:0000256" key="2">
    <source>
        <dbReference type="SAM" id="MobiDB-lite"/>
    </source>
</evidence>
<organism>
    <name type="scientific">Burkholderia lata (strain ATCC 17760 / DSM 23089 / LMG 22485 / NCIMB 9086 / R18194 / 383)</name>
    <dbReference type="NCBI Taxonomy" id="482957"/>
    <lineage>
        <taxon>Bacteria</taxon>
        <taxon>Pseudomonadati</taxon>
        <taxon>Pseudomonadota</taxon>
        <taxon>Betaproteobacteria</taxon>
        <taxon>Burkholderiales</taxon>
        <taxon>Burkholderiaceae</taxon>
        <taxon>Burkholderia</taxon>
        <taxon>Burkholderia cepacia complex</taxon>
    </lineage>
</organism>
<name>PLSX_BURL3</name>
<protein>
    <recommendedName>
        <fullName evidence="1">Phosphate acyltransferase</fullName>
        <ecNumber evidence="1">2.3.1.274</ecNumber>
    </recommendedName>
    <alternativeName>
        <fullName evidence="1">Acyl-ACP phosphotransacylase</fullName>
    </alternativeName>
    <alternativeName>
        <fullName evidence="1">Acyl-[acyl-carrier-protein]--phosphate acyltransferase</fullName>
    </alternativeName>
    <alternativeName>
        <fullName evidence="1">Phosphate-acyl-ACP acyltransferase</fullName>
    </alternativeName>
</protein>
<reference key="1">
    <citation type="submission" date="2005-10" db="EMBL/GenBank/DDBJ databases">
        <title>Complete sequence of chromosome 1 of Burkholderia sp. 383.</title>
        <authorList>
            <consortium name="US DOE Joint Genome Institute"/>
            <person name="Copeland A."/>
            <person name="Lucas S."/>
            <person name="Lapidus A."/>
            <person name="Barry K."/>
            <person name="Detter J.C."/>
            <person name="Glavina T."/>
            <person name="Hammon N."/>
            <person name="Israni S."/>
            <person name="Pitluck S."/>
            <person name="Chain P."/>
            <person name="Malfatti S."/>
            <person name="Shin M."/>
            <person name="Vergez L."/>
            <person name="Schmutz J."/>
            <person name="Larimer F."/>
            <person name="Land M."/>
            <person name="Kyrpides N."/>
            <person name="Lykidis A."/>
            <person name="Richardson P."/>
        </authorList>
    </citation>
    <scope>NUCLEOTIDE SEQUENCE [LARGE SCALE GENOMIC DNA]</scope>
    <source>
        <strain>ATCC 17760 / DSM 23089 / LMG 22485 / NCIMB 9086 / R18194 / 383</strain>
    </source>
</reference>
<comment type="function">
    <text evidence="1">Catalyzes the reversible formation of acyl-phosphate (acyl-PO(4)) from acyl-[acyl-carrier-protein] (acyl-ACP). This enzyme utilizes acyl-ACP as fatty acyl donor, but not acyl-CoA.</text>
</comment>
<comment type="catalytic activity">
    <reaction evidence="1">
        <text>a fatty acyl-[ACP] + phosphate = an acyl phosphate + holo-[ACP]</text>
        <dbReference type="Rhea" id="RHEA:42292"/>
        <dbReference type="Rhea" id="RHEA-COMP:9685"/>
        <dbReference type="Rhea" id="RHEA-COMP:14125"/>
        <dbReference type="ChEBI" id="CHEBI:43474"/>
        <dbReference type="ChEBI" id="CHEBI:59918"/>
        <dbReference type="ChEBI" id="CHEBI:64479"/>
        <dbReference type="ChEBI" id="CHEBI:138651"/>
        <dbReference type="EC" id="2.3.1.274"/>
    </reaction>
</comment>
<comment type="pathway">
    <text evidence="1">Lipid metabolism; phospholipid metabolism.</text>
</comment>
<comment type="subunit">
    <text evidence="1">Homodimer. Probably interacts with PlsY.</text>
</comment>
<comment type="subcellular location">
    <subcellularLocation>
        <location evidence="1">Cytoplasm</location>
    </subcellularLocation>
    <text evidence="1">Associated with the membrane possibly through PlsY.</text>
</comment>
<comment type="similarity">
    <text evidence="1">Belongs to the PlsX family.</text>
</comment>
<gene>
    <name evidence="1" type="primary">plsX</name>
    <name type="ordered locus">Bcep18194_A4232</name>
</gene>
<accession>Q39I87</accession>
<sequence length="368" mass="39024">MTVKLTIDCMGGDHGPSVTVPAAVKFVRAHPDAHLMLVGIESAIRAQLKKLKALDDPALTIVPATEVVAMDDPVEVALRKKKDSSMRVALNHVKEGAAQACISAGNTGALMAVSRYVLKTLPGIERPAIAFALPNPTGYTMMLDLGANVDCEPQHLLQFAEMGHALVAALEGKERPTIGLLNIGEEVIKGNETIKRAGELLRASTLNFRGNVEGNDIYKGTVDVIVCDGFVGNVALKTSEGLAQMLSDIIREEFGRSLMSKLMALLALPVLMRFKKRVDHRQYNGAALLGLKSLVIKSHGSADAYAFEWAIKRGYDAVKNGVLERLARAMADNSVSLGEGEHNAGGAGHASPAAGHHAEPSAAQSSKA</sequence>
<feature type="chain" id="PRO_1000001735" description="Phosphate acyltransferase">
    <location>
        <begin position="1"/>
        <end position="368"/>
    </location>
</feature>
<feature type="region of interest" description="Disordered" evidence="2">
    <location>
        <begin position="337"/>
        <end position="368"/>
    </location>
</feature>
<feature type="compositionally biased region" description="Low complexity" evidence="2">
    <location>
        <begin position="349"/>
        <end position="368"/>
    </location>
</feature>
<dbReference type="EC" id="2.3.1.274" evidence="1"/>
<dbReference type="EMBL" id="CP000151">
    <property type="protein sequence ID" value="ABB07829.1"/>
    <property type="molecule type" value="Genomic_DNA"/>
</dbReference>
<dbReference type="RefSeq" id="WP_011351402.1">
    <property type="nucleotide sequence ID" value="NC_007510.1"/>
</dbReference>
<dbReference type="SMR" id="Q39I87"/>
<dbReference type="GeneID" id="45094133"/>
<dbReference type="KEGG" id="bur:Bcep18194_A4232"/>
<dbReference type="PATRIC" id="fig|482957.22.peg.1124"/>
<dbReference type="HOGENOM" id="CLU_039379_1_0_4"/>
<dbReference type="UniPathway" id="UPA00085"/>
<dbReference type="Proteomes" id="UP000002705">
    <property type="component" value="Chromosome 1"/>
</dbReference>
<dbReference type="GO" id="GO:0005737">
    <property type="term" value="C:cytoplasm"/>
    <property type="evidence" value="ECO:0007669"/>
    <property type="project" value="UniProtKB-SubCell"/>
</dbReference>
<dbReference type="GO" id="GO:0043811">
    <property type="term" value="F:phosphate:acyl-[acyl carrier protein] acyltransferase activity"/>
    <property type="evidence" value="ECO:0007669"/>
    <property type="project" value="UniProtKB-UniRule"/>
</dbReference>
<dbReference type="GO" id="GO:0006633">
    <property type="term" value="P:fatty acid biosynthetic process"/>
    <property type="evidence" value="ECO:0007669"/>
    <property type="project" value="UniProtKB-UniRule"/>
</dbReference>
<dbReference type="GO" id="GO:0008654">
    <property type="term" value="P:phospholipid biosynthetic process"/>
    <property type="evidence" value="ECO:0007669"/>
    <property type="project" value="UniProtKB-KW"/>
</dbReference>
<dbReference type="Gene3D" id="3.40.718.10">
    <property type="entry name" value="Isopropylmalate Dehydrogenase"/>
    <property type="match status" value="1"/>
</dbReference>
<dbReference type="HAMAP" id="MF_00019">
    <property type="entry name" value="PlsX"/>
    <property type="match status" value="1"/>
</dbReference>
<dbReference type="InterPro" id="IPR003664">
    <property type="entry name" value="FA_synthesis"/>
</dbReference>
<dbReference type="InterPro" id="IPR012281">
    <property type="entry name" value="Phospholipid_synth_PlsX-like"/>
</dbReference>
<dbReference type="NCBIfam" id="TIGR00182">
    <property type="entry name" value="plsX"/>
    <property type="match status" value="1"/>
</dbReference>
<dbReference type="PANTHER" id="PTHR30100">
    <property type="entry name" value="FATTY ACID/PHOSPHOLIPID SYNTHESIS PROTEIN PLSX"/>
    <property type="match status" value="1"/>
</dbReference>
<dbReference type="PANTHER" id="PTHR30100:SF1">
    <property type="entry name" value="PHOSPHATE ACYLTRANSFERASE"/>
    <property type="match status" value="1"/>
</dbReference>
<dbReference type="Pfam" id="PF02504">
    <property type="entry name" value="FA_synthesis"/>
    <property type="match status" value="1"/>
</dbReference>
<dbReference type="PIRSF" id="PIRSF002465">
    <property type="entry name" value="Phsphlp_syn_PlsX"/>
    <property type="match status" value="1"/>
</dbReference>
<dbReference type="SUPFAM" id="SSF53659">
    <property type="entry name" value="Isocitrate/Isopropylmalate dehydrogenase-like"/>
    <property type="match status" value="1"/>
</dbReference>